<protein>
    <recommendedName>
        <fullName>Sulfotransferase 1A1</fullName>
        <shortName>ST1A1</shortName>
        <ecNumber evidence="3 5 7 9 10 14 18">2.8.2.1</ecNumber>
    </recommendedName>
    <alternativeName>
        <fullName evidence="29">Aryl sulfotransferase 1</fullName>
    </alternativeName>
    <alternativeName>
        <fullName>HAST1/HAST2</fullName>
    </alternativeName>
    <alternativeName>
        <fullName>Phenol sulfotransferase 1</fullName>
    </alternativeName>
    <alternativeName>
        <fullName evidence="30">Phenol-sulfating phenol sulfotransferase 1</fullName>
        <shortName evidence="30">P-PST 1</shortName>
    </alternativeName>
    <alternativeName>
        <fullName>ST1A3</fullName>
    </alternativeName>
    <alternativeName>
        <fullName>Thermostable phenol sulfotransferase</fullName>
        <shortName>Ts-PST</shortName>
    </alternativeName>
</protein>
<proteinExistence type="evidence at protein level"/>
<name>ST1A1_HUMAN</name>
<feature type="chain" id="PRO_0000085127" description="Sulfotransferase 1A1">
    <location>
        <begin position="1"/>
        <end position="295"/>
    </location>
</feature>
<feature type="active site" description="Proton acceptor" evidence="1">
    <location>
        <position position="108"/>
    </location>
</feature>
<feature type="binding site" evidence="5 7">
    <location>
        <begin position="48"/>
        <end position="53"/>
    </location>
    <ligand>
        <name>3'-phosphoadenylyl sulfate</name>
        <dbReference type="ChEBI" id="CHEBI:58339"/>
    </ligand>
</feature>
<feature type="binding site" evidence="5 7">
    <location>
        <begin position="106"/>
        <end position="108"/>
    </location>
    <ligand>
        <name>substrate</name>
    </ligand>
</feature>
<feature type="binding site" evidence="5 7">
    <location>
        <position position="130"/>
    </location>
    <ligand>
        <name>3'-phosphoadenylyl sulfate</name>
        <dbReference type="ChEBI" id="CHEBI:58339"/>
    </ligand>
</feature>
<feature type="binding site" evidence="5 7">
    <location>
        <position position="138"/>
    </location>
    <ligand>
        <name>3'-phosphoadenylyl sulfate</name>
        <dbReference type="ChEBI" id="CHEBI:58339"/>
    </ligand>
</feature>
<feature type="binding site" evidence="5 7">
    <location>
        <position position="193"/>
    </location>
    <ligand>
        <name>3'-phosphoadenylyl sulfate</name>
        <dbReference type="ChEBI" id="CHEBI:58339"/>
    </ligand>
</feature>
<feature type="binding site" evidence="5 7">
    <location>
        <begin position="227"/>
        <end position="232"/>
    </location>
    <ligand>
        <name>3'-phosphoadenylyl sulfate</name>
        <dbReference type="ChEBI" id="CHEBI:58339"/>
    </ligand>
</feature>
<feature type="binding site" evidence="5 7">
    <location>
        <begin position="255"/>
        <end position="259"/>
    </location>
    <ligand>
        <name>3'-phosphoadenylyl sulfate</name>
        <dbReference type="ChEBI" id="CHEBI:58339"/>
    </ligand>
</feature>
<feature type="modified residue" description="Phosphoserine" evidence="2">
    <location>
        <position position="138"/>
    </location>
</feature>
<feature type="splice variant" id="VSP_040101" description="In isoform 2." evidence="31">
    <original>MELIQDTSRPPLEYVKGVPLIKYFAEALGPLQSFQARPDDLLISTYPKSGTTWVSQILDMIYQGGDLEKCHRAPIFMRVPFLEFKAPGIPSGMETLKDTPAPRLLKTHLPLALLPQTLLDQKVK</original>
    <variation>MLAKLLCDQVVGAPIAVSAFYAGMSILQGKDDIFLDLKQKFWNTYM</variation>
    <location>
        <begin position="1"/>
        <end position="124"/>
    </location>
</feature>
<feature type="sequence variant" id="VAR_009302" description="In dbSNP:rs72547527." evidence="24">
    <original>R</original>
    <variation>Q</variation>
    <location>
        <position position="37"/>
    </location>
</feature>
<feature type="sequence variant" id="VAR_028721" description="In dbSNP:rs1042014.">
    <original>E</original>
    <variation>D</variation>
    <location>
        <position position="151"/>
    </location>
</feature>
<feature type="sequence variant" id="VAR_057339" description="In dbSNP:rs1042011.">
    <original>E</original>
    <variation>Q</variation>
    <location>
        <position position="151"/>
    </location>
</feature>
<feature type="sequence variant" id="VAR_007425" description="In allele SULT1A1*2; has a lower sulfotransferase activity; dbSNP:rs1042028." evidence="4 24 27 28">
    <original>R</original>
    <variation>H</variation>
    <location>
        <position position="213"/>
    </location>
</feature>
<feature type="sequence variant" id="VAR_009303" description="In dbSNP:rs1801030." evidence="6 12 13 15 16 19 20 21 22 23 24 25 26 27 39">
    <original>V</original>
    <variation>M</variation>
    <location>
        <position position="223"/>
    </location>
</feature>
<feature type="sequence variant" id="VAR_014889" description="In dbSNP:rs35728980.">
    <original>N</original>
    <variation>T</variation>
    <location>
        <position position="235"/>
    </location>
</feature>
<feature type="sequence variant" id="VAR_061886" description="In dbSNP:rs36043491." evidence="20 23">
    <original>E</original>
    <variation>K</variation>
    <location>
        <position position="282"/>
    </location>
</feature>
<feature type="mutagenesis site" description="Increased sensitivity of enzyme activity to heat inactivation." evidence="17">
    <original>C</original>
    <variation>S</variation>
    <location>
        <position position="70"/>
    </location>
</feature>
<feature type="mutagenesis site" description="Increased activity towards p-nitrophenol." evidence="10">
    <original>D</original>
    <variation>G</variation>
    <location>
        <position position="249"/>
    </location>
</feature>
<feature type="sequence conflict" description="In Ref. 3; AAA67895." evidence="32" ref="3">
    <original>P</original>
    <variation>L</variation>
    <location>
        <position position="90"/>
    </location>
</feature>
<feature type="sequence conflict" description="In Ref. 5; CAA59147." evidence="32" ref="5">
    <original>A</original>
    <variation>T</variation>
    <location>
        <position position="146"/>
    </location>
</feature>
<feature type="sequence conflict" description="In Ref. 5; CAA59147." evidence="32" ref="5">
    <original>E</original>
    <variation>G</variation>
    <location>
        <position position="181"/>
    </location>
</feature>
<feature type="sequence conflict" description="In Ref. 3; AAA67895." evidence="32" ref="3">
    <original>V</original>
    <variation>A</variation>
    <location>
        <position position="243"/>
    </location>
</feature>
<feature type="sequence conflict" description="In Ref. 3; AAA99892 and 9; AAC50480." evidence="32" ref="3 9">
    <original>S</original>
    <variation>T</variation>
    <location>
        <position position="290"/>
    </location>
</feature>
<feature type="strand" evidence="40">
    <location>
        <begin position="13"/>
        <end position="15"/>
    </location>
</feature>
<feature type="strand" evidence="40">
    <location>
        <begin position="18"/>
        <end position="20"/>
    </location>
</feature>
<feature type="helix" evidence="40">
    <location>
        <begin position="22"/>
        <end position="31"/>
    </location>
</feature>
<feature type="strand" evidence="40">
    <location>
        <begin position="41"/>
        <end position="46"/>
    </location>
</feature>
<feature type="helix" evidence="40">
    <location>
        <begin position="51"/>
        <end position="62"/>
    </location>
</feature>
<feature type="turn" evidence="40">
    <location>
        <begin position="63"/>
        <end position="65"/>
    </location>
</feature>
<feature type="helix" evidence="40">
    <location>
        <begin position="67"/>
        <end position="70"/>
    </location>
</feature>
<feature type="helix" evidence="40">
    <location>
        <begin position="75"/>
        <end position="78"/>
    </location>
</feature>
<feature type="strand" evidence="41">
    <location>
        <begin position="87"/>
        <end position="89"/>
    </location>
</feature>
<feature type="helix" evidence="40">
    <location>
        <begin position="92"/>
        <end position="97"/>
    </location>
</feature>
<feature type="strand" evidence="40">
    <location>
        <begin position="104"/>
        <end position="107"/>
    </location>
</feature>
<feature type="turn" evidence="40">
    <location>
        <begin position="111"/>
        <end position="113"/>
    </location>
</feature>
<feature type="helix" evidence="40">
    <location>
        <begin position="116"/>
        <end position="120"/>
    </location>
</feature>
<feature type="strand" evidence="40">
    <location>
        <begin position="124"/>
        <end position="129"/>
    </location>
</feature>
<feature type="helix" evidence="40">
    <location>
        <begin position="132"/>
        <end position="145"/>
    </location>
</feature>
<feature type="helix" evidence="40">
    <location>
        <begin position="155"/>
        <end position="164"/>
    </location>
</feature>
<feature type="helix" evidence="40">
    <location>
        <begin position="172"/>
        <end position="182"/>
    </location>
</feature>
<feature type="turn" evidence="40">
    <location>
        <begin position="183"/>
        <end position="185"/>
    </location>
</feature>
<feature type="strand" evidence="40">
    <location>
        <begin position="188"/>
        <end position="192"/>
    </location>
</feature>
<feature type="helix" evidence="40">
    <location>
        <begin position="193"/>
        <end position="198"/>
    </location>
</feature>
<feature type="helix" evidence="40">
    <location>
        <begin position="200"/>
        <end position="211"/>
    </location>
</feature>
<feature type="helix" evidence="40">
    <location>
        <begin position="217"/>
        <end position="226"/>
    </location>
</feature>
<feature type="helix" evidence="40">
    <location>
        <begin position="229"/>
        <end position="234"/>
    </location>
</feature>
<feature type="turn" evidence="40">
    <location>
        <begin position="236"/>
        <end position="238"/>
    </location>
</feature>
<feature type="turn" evidence="40">
    <location>
        <begin position="245"/>
        <end position="247"/>
    </location>
</feature>
<feature type="turn" evidence="40">
    <location>
        <begin position="250"/>
        <end position="252"/>
    </location>
</feature>
<feature type="helix" evidence="40">
    <location>
        <begin position="263"/>
        <end position="266"/>
    </location>
</feature>
<feature type="helix" evidence="40">
    <location>
        <begin position="270"/>
        <end position="283"/>
    </location>
</feature>
<feature type="turn" evidence="40">
    <location>
        <begin position="284"/>
        <end position="286"/>
    </location>
</feature>
<accession>P50225</accession>
<accession>Q2NL71</accession>
<accession>Q86U58</accession>
<accession>Q92818</accession>
<accession>Q9BVU6</accession>
<accession>Q9UGG7</accession>
<keyword id="KW-0002">3D-structure</keyword>
<keyword id="KW-0025">Alternative splicing</keyword>
<keyword id="KW-0128">Catecholamine metabolism</keyword>
<keyword id="KW-0963">Cytoplasm</keyword>
<keyword id="KW-0903">Direct protein sequencing</keyword>
<keyword id="KW-0443">Lipid metabolism</keyword>
<keyword id="KW-0597">Phosphoprotein</keyword>
<keyword id="KW-1267">Proteomics identification</keyword>
<keyword id="KW-1185">Reference proteome</keyword>
<keyword id="KW-0753">Steroid metabolism</keyword>
<keyword id="KW-0808">Transferase</keyword>
<sequence length="295" mass="34165">MELIQDTSRPPLEYVKGVPLIKYFAEALGPLQSFQARPDDLLISTYPKSGTTWVSQILDMIYQGGDLEKCHRAPIFMRVPFLEFKAPGIPSGMETLKDTPAPRLLKTHLPLALLPQTLLDQKVKVVYVARNAKDVAVSYYHFYHMAKVHPEPGTWDSFLEKFMVGEVSYGSWYQHVQEWWELSRTHPVLYLFYEDMKENPKREIQKILEFVGRSLPEETVDFVVQHTSFKEMKKNPMTNYTTVPQEFMDHSISPFMRKGMAGDWKTTFTVAQNERFDADYAEKMAGCSLSFRSEL</sequence>
<organism>
    <name type="scientific">Homo sapiens</name>
    <name type="common">Human</name>
    <dbReference type="NCBI Taxonomy" id="9606"/>
    <lineage>
        <taxon>Eukaryota</taxon>
        <taxon>Metazoa</taxon>
        <taxon>Chordata</taxon>
        <taxon>Craniata</taxon>
        <taxon>Vertebrata</taxon>
        <taxon>Euteleostomi</taxon>
        <taxon>Mammalia</taxon>
        <taxon>Eutheria</taxon>
        <taxon>Euarchontoglires</taxon>
        <taxon>Primates</taxon>
        <taxon>Haplorrhini</taxon>
        <taxon>Catarrhini</taxon>
        <taxon>Hominidae</taxon>
        <taxon>Homo</taxon>
    </lineage>
</organism>
<reference key="1">
    <citation type="journal article" date="1993" name="Biochem. Biophys. Res. Commun.">
        <title>Identification of two human brain aryl sulfotransferase cDNAs.</title>
        <authorList>
            <person name="Zhu X."/>
            <person name="Veronese M.E."/>
            <person name="Bernard C.C."/>
            <person name="Sansom L.N."/>
            <person name="McManus M.E."/>
        </authorList>
    </citation>
    <scope>NUCLEOTIDE SEQUENCE [MRNA] (ISOFORM 1)</scope>
    <scope>VARIANT MET-223</scope>
    <source>
        <tissue>Brain</tissue>
    </source>
</reference>
<reference key="2">
    <citation type="journal article" date="1993" name="Biochem. Biophys. Res. Commun.">
        <title>Molecular characterisation of a human aryl sulfotransferase cDNA.</title>
        <authorList>
            <person name="Zhu X."/>
            <person name="Veronese M.E."/>
            <person name="Sansom L.N."/>
            <person name="McManus M.E."/>
        </authorList>
    </citation>
    <scope>NUCLEOTIDE SEQUENCE [MRNA] (ISOFORM 1)</scope>
    <scope>VARIANT MET-223</scope>
    <source>
        <tissue>Liver</tissue>
    </source>
</reference>
<reference key="3">
    <citation type="journal article" date="1993" name="Mol. Pharmacol.">
        <title>Sequence analysis and expression of the cDNA for the phenol-sulfating form of human liver phenol sulfotransferase.</title>
        <authorList>
            <person name="Wilborn T.W."/>
            <person name="Comer K.A."/>
            <person name="Dooley T.P."/>
            <person name="Reardon I.M."/>
            <person name="Heinrikson R.L."/>
            <person name="Falany C.N."/>
        </authorList>
    </citation>
    <scope>NUCLEOTIDE SEQUENCE [MRNA] (ISOFORM 1)</scope>
    <scope>PARTIAL PROTEIN SEQUENCE</scope>
    <scope>VARIANTS MET-223 AND LYS-282</scope>
    <source>
        <tissue>Liver</tissue>
    </source>
</reference>
<reference key="4">
    <citation type="journal article" date="1994" name="Chem. Biol. Interact.">
        <title>Structural similarity and diversity of sulfotransferases.</title>
        <authorList>
            <person name="Yamazoe Y."/>
            <person name="Nagata K."/>
            <person name="Ozawa S."/>
            <person name="Kato R."/>
        </authorList>
    </citation>
    <scope>NUCLEOTIDE SEQUENCE [MRNA] (ISOFORM 1)</scope>
    <scope>VARIANT MET-223</scope>
</reference>
<reference key="5">
    <citation type="journal article" date="1995" name="Biochem. Biophys. Res. Commun.">
        <title>Molecular cloning of an isoform of phenol sulfotransferase from human brain hippocampus.</title>
        <authorList>
            <person name="Hwang S.-R."/>
            <person name="Kohn A.B."/>
            <person name="Hook V.Y.H."/>
        </authorList>
    </citation>
    <scope>NUCLEOTIDE SEQUENCE [MRNA] (ISOFORM 1)</scope>
    <scope>VARIANT MET-223</scope>
    <source>
        <tissue>Hippocampus</tissue>
    </source>
</reference>
<reference key="6">
    <citation type="journal article" date="1995" name="Biochem. Biophys. Res. Commun.">
        <title>Human platelet phenolsulfotransferases: cDNA cloning, stable expression in V79 cells and identification of a novel allelic variant of the phenol-sulfating form.</title>
        <authorList>
            <person name="Jones A.L."/>
            <person name="Hagen M."/>
            <person name="Coughtrie M.W.H."/>
            <person name="Roberts R.C."/>
            <person name="Glatt H."/>
        </authorList>
    </citation>
    <scope>NUCLEOTIDE SEQUENCE [MRNA] (ISOFORM 1)</scope>
    <scope>VARIANT MET-223</scope>
    <source>
        <tissue>Blood</tissue>
    </source>
</reference>
<reference key="7">
    <citation type="journal article" date="1995" name="Pharmacogenetics">
        <title>Primary structures and properties of two related forms of aryl sulfotransferases in human liver.</title>
        <authorList>
            <person name="Ozawa S."/>
            <person name="Nagata K."/>
            <person name="Shimada M."/>
            <person name="Ueda M."/>
            <person name="Tsuzuki T."/>
            <person name="Yamazoe Y."/>
            <person name="Kato R."/>
        </authorList>
    </citation>
    <scope>NUCLEOTIDE SEQUENCE [MRNA] (ISOFORM 1)</scope>
    <scope>VARIANT MET-223</scope>
    <source>
        <tissue>Liver</tissue>
    </source>
</reference>
<reference key="8">
    <citation type="journal article" date="1996" name="Biochem. Biophys. Res. Commun.">
        <title>Genomic organization and DNA sequences of two human phenol sulfotransferase genes (STP1 and STP2) on the short arm of chromosome 16.</title>
        <authorList>
            <person name="Dooley T.P."/>
            <person name="Huang Z."/>
        </authorList>
    </citation>
    <scope>NUCLEOTIDE SEQUENCE [GENOMIC DNA] (ISOFORM 1)</scope>
    <scope>VARIANT MET-223</scope>
</reference>
<reference key="9">
    <citation type="journal article" date="1996" name="DNA Cell Biol.">
        <title>Human phenol sulfotransferase gene contains two alternative promoters: structure and expression of the gene.</title>
        <authorList>
            <person name="Bernier F."/>
            <person name="Soucy P."/>
            <person name="Luu-The V."/>
        </authorList>
    </citation>
    <scope>NUCLEOTIDE SEQUENCE [GENOMIC DNA] (ISOFORM 1)</scope>
    <scope>VARIANTS MET-223 AND LYS-282</scope>
</reference>
<reference key="10">
    <citation type="journal article" date="1998" name="Mol. Pharmacol.">
        <title>A single amino acid, Glu146, governs the substrate specificity of a human dopamine sulfotransferase, SULT1A3.</title>
        <authorList>
            <person name="Dajani R."/>
            <person name="Hood A.M."/>
            <person name="Coughtrie M.W."/>
        </authorList>
    </citation>
    <scope>NUCLEOTIDE SEQUENCE [MRNA] (ISOFORM 1)</scope>
    <scope>VARIANT MET-223</scope>
    <source>
        <tissue>Liver</tissue>
    </source>
</reference>
<reference key="11">
    <citation type="submission" date="1997-03" db="EMBL/GenBank/DDBJ databases">
        <authorList>
            <person name="Raftogianis R.B."/>
            <person name="Her C."/>
            <person name="Weinshilboum R.M."/>
        </authorList>
    </citation>
    <scope>NUCLEOTIDE SEQUENCE [GENOMIC DNA] (ISOFORM 1)</scope>
    <scope>VARIANT MET-223</scope>
</reference>
<reference key="12">
    <citation type="submission" date="2001-05" db="EMBL/GenBank/DDBJ databases">
        <title>Identification of immuno-peptidmics that are recognized by tumor-reactive CTL generated from TIL of colon cancer patients.</title>
        <authorList>
            <person name="Shichijo S."/>
            <person name="Itoh K."/>
        </authorList>
    </citation>
    <scope>NUCLEOTIDE SEQUENCE [LARGE SCALE MRNA]</scope>
    <scope>VARIANTS HIS-213 AND MET-223</scope>
    <source>
        <tissue>Colon adenocarcinoma</tissue>
    </source>
</reference>
<reference key="13">
    <citation type="submission" date="2003-05" db="EMBL/GenBank/DDBJ databases">
        <title>Cloning of human full-length CDSs in BD Creator(TM) system donor vector.</title>
        <authorList>
            <person name="Kalnine N."/>
            <person name="Chen X."/>
            <person name="Rolfs A."/>
            <person name="Halleck A."/>
            <person name="Hines L."/>
            <person name="Eisenstein S."/>
            <person name="Koundinya M."/>
            <person name="Raphael J."/>
            <person name="Moreira D."/>
            <person name="Kelley T."/>
            <person name="LaBaer J."/>
            <person name="Lin Y."/>
            <person name="Phelan M."/>
            <person name="Farmer A."/>
        </authorList>
    </citation>
    <scope>NUCLEOTIDE SEQUENCE [LARGE SCALE MRNA] (ISOFORM 1)</scope>
    <scope>VARIANT HIS-213</scope>
</reference>
<reference key="14">
    <citation type="submission" date="2004-07" db="EMBL/GenBank/DDBJ databases">
        <title>Full-length cDNA libraries and normalization.</title>
        <authorList>
            <person name="Li W.B."/>
            <person name="Gruber C."/>
            <person name="Jessee J."/>
            <person name="Polayes D."/>
        </authorList>
    </citation>
    <scope>NUCLEOTIDE SEQUENCE [LARGE SCALE MRNA] (ISOFORM 2)</scope>
</reference>
<reference key="15">
    <citation type="journal article" date="2004" name="Nature">
        <title>The sequence and analysis of duplication-rich human chromosome 16.</title>
        <authorList>
            <person name="Martin J."/>
            <person name="Han C."/>
            <person name="Gordon L.A."/>
            <person name="Terry A."/>
            <person name="Prabhakar S."/>
            <person name="She X."/>
            <person name="Xie G."/>
            <person name="Hellsten U."/>
            <person name="Chan Y.M."/>
            <person name="Altherr M."/>
            <person name="Couronne O."/>
            <person name="Aerts A."/>
            <person name="Bajorek E."/>
            <person name="Black S."/>
            <person name="Blumer H."/>
            <person name="Branscomb E."/>
            <person name="Brown N.C."/>
            <person name="Bruno W.J."/>
            <person name="Buckingham J.M."/>
            <person name="Callen D.F."/>
            <person name="Campbell C.S."/>
            <person name="Campbell M.L."/>
            <person name="Campbell E.W."/>
            <person name="Caoile C."/>
            <person name="Challacombe J.F."/>
            <person name="Chasteen L.A."/>
            <person name="Chertkov O."/>
            <person name="Chi H.C."/>
            <person name="Christensen M."/>
            <person name="Clark L.M."/>
            <person name="Cohn J.D."/>
            <person name="Denys M."/>
            <person name="Detter J.C."/>
            <person name="Dickson M."/>
            <person name="Dimitrijevic-Bussod M."/>
            <person name="Escobar J."/>
            <person name="Fawcett J.J."/>
            <person name="Flowers D."/>
            <person name="Fotopulos D."/>
            <person name="Glavina T."/>
            <person name="Gomez M."/>
            <person name="Gonzales E."/>
            <person name="Goodstein D."/>
            <person name="Goodwin L.A."/>
            <person name="Grady D.L."/>
            <person name="Grigoriev I."/>
            <person name="Groza M."/>
            <person name="Hammon N."/>
            <person name="Hawkins T."/>
            <person name="Haydu L."/>
            <person name="Hildebrand C.E."/>
            <person name="Huang W."/>
            <person name="Israni S."/>
            <person name="Jett J."/>
            <person name="Jewett P.B."/>
            <person name="Kadner K."/>
            <person name="Kimball H."/>
            <person name="Kobayashi A."/>
            <person name="Krawczyk M.-C."/>
            <person name="Leyba T."/>
            <person name="Longmire J.L."/>
            <person name="Lopez F."/>
            <person name="Lou Y."/>
            <person name="Lowry S."/>
            <person name="Ludeman T."/>
            <person name="Manohar C.F."/>
            <person name="Mark G.A."/>
            <person name="McMurray K.L."/>
            <person name="Meincke L.J."/>
            <person name="Morgan J."/>
            <person name="Moyzis R.K."/>
            <person name="Mundt M.O."/>
            <person name="Munk A.C."/>
            <person name="Nandkeshwar R.D."/>
            <person name="Pitluck S."/>
            <person name="Pollard M."/>
            <person name="Predki P."/>
            <person name="Parson-Quintana B."/>
            <person name="Ramirez L."/>
            <person name="Rash S."/>
            <person name="Retterer J."/>
            <person name="Ricke D.O."/>
            <person name="Robinson D.L."/>
            <person name="Rodriguez A."/>
            <person name="Salamov A."/>
            <person name="Saunders E.H."/>
            <person name="Scott D."/>
            <person name="Shough T."/>
            <person name="Stallings R.L."/>
            <person name="Stalvey M."/>
            <person name="Sutherland R.D."/>
            <person name="Tapia R."/>
            <person name="Tesmer J.G."/>
            <person name="Thayer N."/>
            <person name="Thompson L.S."/>
            <person name="Tice H."/>
            <person name="Torney D.C."/>
            <person name="Tran-Gyamfi M."/>
            <person name="Tsai M."/>
            <person name="Ulanovsky L.E."/>
            <person name="Ustaszewska A."/>
            <person name="Vo N."/>
            <person name="White P.S."/>
            <person name="Williams A.L."/>
            <person name="Wills P.L."/>
            <person name="Wu J.-R."/>
            <person name="Wu K."/>
            <person name="Yang J."/>
            <person name="DeJong P."/>
            <person name="Bruce D."/>
            <person name="Doggett N.A."/>
            <person name="Deaven L."/>
            <person name="Schmutz J."/>
            <person name="Grimwood J."/>
            <person name="Richardson P."/>
            <person name="Rokhsar D.S."/>
            <person name="Eichler E.E."/>
            <person name="Gilna P."/>
            <person name="Lucas S.M."/>
            <person name="Myers R.M."/>
            <person name="Rubin E.M."/>
            <person name="Pennacchio L.A."/>
        </authorList>
    </citation>
    <scope>NUCLEOTIDE SEQUENCE [LARGE SCALE GENOMIC DNA]</scope>
</reference>
<reference key="16">
    <citation type="journal article" date="2004" name="Genome Res.">
        <title>The status, quality, and expansion of the NIH full-length cDNA project: the Mammalian Gene Collection (MGC).</title>
        <authorList>
            <consortium name="The MGC Project Team"/>
        </authorList>
    </citation>
    <scope>NUCLEOTIDE SEQUENCE [LARGE SCALE MRNA] (ISOFORM 1)</scope>
    <scope>VARIANT MET-223</scope>
    <source>
        <tissue>Colon</tissue>
        <tissue>Placenta</tissue>
    </source>
</reference>
<reference key="17">
    <citation type="journal article" date="1993" name="Genomics">
        <title>Mapping of the phenol sulfotransferase gene (STP) to human chromosome 16p12.1-p11.2 and to mouse chromosome 7.</title>
        <authorList>
            <person name="Dooley T.P."/>
            <person name="Obermoeller R.D."/>
            <person name="Leiter E.H."/>
            <person name="Chapman H.D."/>
            <person name="Falany C.N."/>
            <person name="Deng Z."/>
            <person name="Siciliano M.J."/>
        </authorList>
    </citation>
    <scope>NUCLEOTIDE SEQUENCE [GENOMIC DNA] OF 1-107 (ISOFORM 1)</scope>
</reference>
<reference key="18">
    <citation type="journal article" date="1994" name="Biochem. J.">
        <title>Functional characterization of two human sulphotransferase cDNAs that encode monoamine- and phenol-sulphating forms of phenol sulphotransferase: substrate kinetics, thermal-stability and inhibitor-sensitivity studies.</title>
        <authorList>
            <person name="Veronese M.E."/>
            <person name="Burgess W."/>
            <person name="Zhu X."/>
            <person name="McManus M.E."/>
        </authorList>
    </citation>
    <scope>FUNCTION</scope>
    <scope>CATALYTIC ACTIVITY</scope>
    <scope>SUBCELLULAR LOCATION</scope>
    <scope>BIOPHYSICOCHEMICAL PROPERTIES</scope>
</reference>
<reference key="19">
    <citation type="journal article" date="1994" name="Chem. Biol. Interact.">
        <title>Characterization of expressed human phenol-sulfating phenol sulfotransferase: effect of mutating cys70 on activity and thermostability.</title>
        <authorList>
            <person name="Falany C.N."/>
            <person name="Zhuang W."/>
            <person name="Falany J.L."/>
        </authorList>
    </citation>
    <scope>MUTAGENESIS OF CYS-70</scope>
</reference>
<reference key="20">
    <citation type="journal article" date="1995" name="Cancer Res.">
        <title>Metabolic activation of N-hydroxy arylamines and N-hydroxy heterocyclic amines by human sulfotransferase(s).</title>
        <authorList>
            <person name="Chou H.C."/>
            <person name="Lang N.P."/>
            <person name="Kadlubar F.F."/>
        </authorList>
    </citation>
    <scope>CATALYTIC ACTIVITY</scope>
    <scope>FUNCTION</scope>
</reference>
<reference key="21">
    <citation type="journal article" date="1999" name="J. Clin. Endocrinol. Metab.">
        <title>Characterization of human iodothyronine sulfotransferases.</title>
        <authorList>
            <person name="Kester M.H."/>
            <person name="Kaptein E."/>
            <person name="Roest T.J."/>
            <person name="van Dijk C.H."/>
            <person name="Tibboel D."/>
            <person name="Meinl W."/>
            <person name="Glatt H."/>
            <person name="Coughtrie M.W."/>
            <person name="Visser T.J."/>
        </authorList>
    </citation>
    <scope>CATALYTIC ACTIVITY</scope>
    <scope>FUNCTION</scope>
    <scope>BIOPHYSICOCHEMICAL PROPERTIES</scope>
</reference>
<reference key="22">
    <citation type="journal article" date="2014" name="J. Proteomics">
        <title>An enzyme assisted RP-RPLC approach for in-depth analysis of human liver phosphoproteome.</title>
        <authorList>
            <person name="Bian Y."/>
            <person name="Song C."/>
            <person name="Cheng K."/>
            <person name="Dong M."/>
            <person name="Wang F."/>
            <person name="Huang J."/>
            <person name="Sun D."/>
            <person name="Wang L."/>
            <person name="Ye M."/>
            <person name="Zou H."/>
        </authorList>
    </citation>
    <scope>IDENTIFICATION BY MASS SPECTROMETRY [LARGE SCALE ANALYSIS]</scope>
    <source>
        <tissue>Liver</tissue>
    </source>
</reference>
<reference key="23">
    <citation type="journal article" date="2015" name="Proteomics">
        <title>N-terminome analysis of the human mitochondrial proteome.</title>
        <authorList>
            <person name="Vaca Jacome A.S."/>
            <person name="Rabilloud T."/>
            <person name="Schaeffer-Reiss C."/>
            <person name="Rompais M."/>
            <person name="Ayoub D."/>
            <person name="Lane L."/>
            <person name="Bairoch A."/>
            <person name="Van Dorsselaer A."/>
            <person name="Carapito C."/>
        </authorList>
    </citation>
    <scope>IDENTIFICATION BY MASS SPECTROMETRY [LARGE SCALE ANALYSIS]</scope>
</reference>
<reference key="24">
    <citation type="journal article" date="2022" name="Nature">
        <title>A gut-derived metabolite alters brain activity and anxiety behaviour in mice.</title>
        <authorList>
            <person name="Needham B.D."/>
            <person name="Funabashi M."/>
            <person name="Adame M.D."/>
            <person name="Wang Z."/>
            <person name="Boktor J.C."/>
            <person name="Haney J."/>
            <person name="Wu W.L."/>
            <person name="Rabut C."/>
            <person name="Ladinsky M.S."/>
            <person name="Hwang S.J."/>
            <person name="Guo Y."/>
            <person name="Zhu Q."/>
            <person name="Griffiths J.A."/>
            <person name="Knight R."/>
            <person name="Bjorkman P.J."/>
            <person name="Shapiro M.G."/>
            <person name="Geschwind D.H."/>
            <person name="Holschneider D.P."/>
            <person name="Fischbach M.A."/>
            <person name="Mazmanian S.K."/>
        </authorList>
    </citation>
    <scope>FUNCTION</scope>
    <scope>CATALYTIC ACTIVITY</scope>
</reference>
<reference key="25">
    <citation type="journal article" date="2003" name="J. Biol. Chem.">
        <title>Structure of a human carcinogen-converting enzyme, SULT1A1. Structural and kinetic implications of substrate inhibition.</title>
        <authorList>
            <person name="Gamage N.U."/>
            <person name="Duggleby R.G."/>
            <person name="Barnett A.C."/>
            <person name="Tresillian M."/>
            <person name="Latham C.F."/>
            <person name="Liyou N.E."/>
            <person name="McManus M.E."/>
            <person name="Martin J.L."/>
        </authorList>
    </citation>
    <scope>X-RAY CRYSTALLOGRAPHY (1.9 ANGSTROMS) IN COMPLEX WITH ADENOSINE-3'-5'-DIPHOSPHATE (PAP) AND P-NITROPHENOL</scope>
    <scope>CATALYTIC ACTIVITY</scope>
    <scope>FUNCTION</scope>
</reference>
<reference key="26">
    <citation type="journal article" date="2005" name="J. Biol. Chem.">
        <title>The structure of human SULT1A1 crystallized with estradiol. An insight into active site plasticity and substrate inhibition with multi-ring substrates.</title>
        <authorList>
            <person name="Gamage N.U."/>
            <person name="Tsvetanov S."/>
            <person name="Duggleby R.G."/>
            <person name="McManus M.E."/>
            <person name="Martin J.L."/>
        </authorList>
    </citation>
    <scope>X-RAY CRYSTALLOGRAPHY (2.30 ANGSTROMS) IN COMPLEX WITH ADENOSINE-3'-5'-DIPHOSPHATE AND ESTRADIOL</scope>
    <scope>CATALYTIC ACTIVITY</scope>
    <scope>FUNCTION</scope>
</reference>
<reference key="27">
    <citation type="journal article" date="2010" name="Biochem. Biophys. Res. Commun.">
        <title>Crystal structures of SULT1A2 and SULT1A1 *3: insights into the substrate inhibition and the role of Tyr149 in SULT1A2.</title>
        <authorList>
            <person name="Lu J."/>
            <person name="Li H."/>
            <person name="Zhang J."/>
            <person name="Li M."/>
            <person name="Liu M.Y."/>
            <person name="An X."/>
            <person name="Liu M.C."/>
            <person name="Chang W."/>
        </authorList>
    </citation>
    <scope>X-RAY CRYSTALLOGRAPHY (2.30 ANGSTROMS) IN COMPLEX WITH ADENOSINE-3'-5'-DIPHOSPHATE</scope>
</reference>
<reference key="28">
    <citation type="journal article" date="2011" name="J. Mol. Biol.">
        <title>Directed evolution of sulfotransferases and paraoxonases by ancestral libraries.</title>
        <authorList>
            <person name="Alcolombri U."/>
            <person name="Elias M."/>
            <person name="Tawfik D.S."/>
        </authorList>
    </citation>
    <scope>X-RAY CRYSTALLOGRAPHY (2.35 ANGSTROMS) IN COMPLEXES WITH ADENOSINE-3'-5'-DIPHOSPHATE AND P-NITROPHENOL</scope>
    <scope>CATALYTIC ACTIVITY</scope>
    <scope>FUNCTION</scope>
</reference>
<reference key="29">
    <citation type="journal article" date="2011" name="PLoS ONE">
        <title>The molecular basis for the broad substrate specificity of human sulfotransferase 1A1.</title>
        <authorList>
            <person name="Berger I."/>
            <person name="Guttman C."/>
            <person name="Amar D."/>
            <person name="Zarivach R."/>
            <person name="Aharoni A."/>
        </authorList>
    </citation>
    <scope>X-RAY CRYSTALLOGRAPHY (2.00 ANGSTROMS) IN COMPLEXES WITH ADENOSINE-3'-5'-DIPHOSPHATE AND P-NITROPHENOL</scope>
    <scope>CATALYTIC ACTIVITY</scope>
    <scope>FUNCTION</scope>
    <scope>MUTAGENESIS OF ASP-249</scope>
</reference>
<reference key="30">
    <citation type="journal article" date="1997" name="Biochem. Biophys. Res. Commun.">
        <title>Phenol sulfotransferase pharmacogenetics in humans: association of common SULT1A1 alleles with TS PST phenotype.</title>
        <authorList>
            <person name="Raftogianis R.B."/>
            <person name="Wood T.C."/>
            <person name="Otterness D.M."/>
            <person name="Van Loon J.A."/>
            <person name="Weinshilboum R.M."/>
        </authorList>
    </citation>
    <scope>VARIANTS GLN-37; HIS-213 AND MET-223</scope>
</reference>
<reference key="31">
    <citation type="journal article" date="2000" name="Pharmacogenetics">
        <title>Association between functional genetic polymorphisms of human sulfotransferases 1A1 and 1A2.</title>
        <authorList>
            <person name="Engelke C.E."/>
            <person name="Meinl W."/>
            <person name="Boeing H."/>
            <person name="Glatt H."/>
        </authorList>
    </citation>
    <scope>VARIANT HIS-213</scope>
</reference>
<reference key="32">
    <citation type="journal article" date="2011" name="BMC Syst. Biol.">
        <title>Initial characterization of the human central proteome.</title>
        <authorList>
            <person name="Burkard T.R."/>
            <person name="Planyavsky M."/>
            <person name="Kaupe I."/>
            <person name="Breitwieser F.P."/>
            <person name="Buerckstuemmer T."/>
            <person name="Bennett K.L."/>
            <person name="Superti-Furga G."/>
            <person name="Colinge J."/>
        </authorList>
    </citation>
    <scope>VARIANT [LARGE SCALE ANALYSIS] MET-223</scope>
    <scope>IDENTIFICATION BY MASS SPECTROMETRY [LARGE SCALE ANALYSIS]</scope>
</reference>
<dbReference type="EC" id="2.8.2.1" evidence="3 5 7 9 10 14 18"/>
<dbReference type="EMBL" id="U09031">
    <property type="protein sequence ID" value="AAA18613.1"/>
    <property type="molecule type" value="mRNA"/>
</dbReference>
<dbReference type="EMBL" id="L19955">
    <property type="protein sequence ID" value="AAA02935.1"/>
    <property type="molecule type" value="mRNA"/>
</dbReference>
<dbReference type="EMBL" id="L10819">
    <property type="protein sequence ID" value="AAA35562.1"/>
    <property type="molecule type" value="mRNA"/>
</dbReference>
<dbReference type="EMBL" id="L19999">
    <property type="protein sequence ID" value="AAA99892.1"/>
    <property type="molecule type" value="mRNA"/>
</dbReference>
<dbReference type="EMBL" id="U26309">
    <property type="protein sequence ID" value="AAA67895.1"/>
    <property type="molecule type" value="mRNA"/>
</dbReference>
<dbReference type="EMBL" id="X84654">
    <property type="protein sequence ID" value="CAA59147.1"/>
    <property type="molecule type" value="mRNA"/>
</dbReference>
<dbReference type="EMBL" id="X78283">
    <property type="protein sequence ID" value="CAA55089.1"/>
    <property type="molecule type" value="mRNA"/>
</dbReference>
<dbReference type="EMBL" id="U71086">
    <property type="protein sequence ID" value="AAB09597.1"/>
    <property type="molecule type" value="Genomic_DNA"/>
</dbReference>
<dbReference type="EMBL" id="U54701">
    <property type="protein sequence ID" value="AAC50480.1"/>
    <property type="molecule type" value="Genomic_DNA"/>
</dbReference>
<dbReference type="EMBL" id="AJ007418">
    <property type="protein sequence ID" value="CAA07495.1"/>
    <property type="molecule type" value="mRNA"/>
</dbReference>
<dbReference type="EMBL" id="U52852">
    <property type="protein sequence ID" value="AAC51816.1"/>
    <property type="molecule type" value="Genomic_DNA"/>
</dbReference>
<dbReference type="EMBL" id="AB062428">
    <property type="protein sequence ID" value="BAB93491.1"/>
    <property type="molecule type" value="mRNA"/>
</dbReference>
<dbReference type="EMBL" id="BT007324">
    <property type="protein sequence ID" value="AAP35988.1"/>
    <property type="molecule type" value="mRNA"/>
</dbReference>
<dbReference type="EMBL" id="CR608214">
    <property type="status" value="NOT_ANNOTATED_CDS"/>
    <property type="molecule type" value="mRNA"/>
</dbReference>
<dbReference type="EMBL" id="AC020765">
    <property type="status" value="NOT_ANNOTATED_CDS"/>
    <property type="molecule type" value="Genomic_DNA"/>
</dbReference>
<dbReference type="EMBL" id="BC000923">
    <property type="protein sequence ID" value="AAH00923.1"/>
    <property type="molecule type" value="mRNA"/>
</dbReference>
<dbReference type="EMBL" id="BC110887">
    <property type="protein sequence ID" value="AAI10888.1"/>
    <property type="molecule type" value="mRNA"/>
</dbReference>
<dbReference type="EMBL" id="L15346">
    <property type="protein sequence ID" value="AAA60595.1"/>
    <property type="molecule type" value="Genomic_DNA"/>
</dbReference>
<dbReference type="CCDS" id="CCDS32420.1">
    <molecule id="P50225-1"/>
</dbReference>
<dbReference type="PIR" id="I57945">
    <property type="entry name" value="I57945"/>
</dbReference>
<dbReference type="PIR" id="JC2523">
    <property type="entry name" value="JC2523"/>
</dbReference>
<dbReference type="PIR" id="JC5248">
    <property type="entry name" value="JC5248"/>
</dbReference>
<dbReference type="PIR" id="S52399">
    <property type="entry name" value="S52399"/>
</dbReference>
<dbReference type="PIR" id="S52794">
    <property type="entry name" value="S52794"/>
</dbReference>
<dbReference type="RefSeq" id="NP_001046.2">
    <molecule id="P50225-1"/>
    <property type="nucleotide sequence ID" value="NM_001055.3"/>
</dbReference>
<dbReference type="RefSeq" id="NP_001381350.1">
    <molecule id="P50225-1"/>
    <property type="nucleotide sequence ID" value="NM_001394421.1"/>
</dbReference>
<dbReference type="RefSeq" id="NP_001381351.1">
    <molecule id="P50225-1"/>
    <property type="nucleotide sequence ID" value="NM_001394422.1"/>
</dbReference>
<dbReference type="RefSeq" id="NP_001381352.1">
    <molecule id="P50225-1"/>
    <property type="nucleotide sequence ID" value="NM_001394423.1"/>
</dbReference>
<dbReference type="RefSeq" id="NP_001381353.1">
    <molecule id="P50225-1"/>
    <property type="nucleotide sequence ID" value="NM_001394424.1"/>
</dbReference>
<dbReference type="RefSeq" id="NP_001381354.1">
    <molecule id="P50225-1"/>
    <property type="nucleotide sequence ID" value="NM_001394425.1"/>
</dbReference>
<dbReference type="RefSeq" id="NP_803565.1">
    <molecule id="P50225-1"/>
    <property type="nucleotide sequence ID" value="NM_177529.3"/>
</dbReference>
<dbReference type="RefSeq" id="NP_803566.1">
    <molecule id="P50225-1"/>
    <property type="nucleotide sequence ID" value="NM_177530.4"/>
</dbReference>
<dbReference type="RefSeq" id="NP_803878.1">
    <molecule id="P50225-1"/>
    <property type="nucleotide sequence ID" value="NM_177534.4"/>
</dbReference>
<dbReference type="RefSeq" id="NP_803880.1">
    <property type="nucleotide sequence ID" value="NM_177536.3"/>
</dbReference>
<dbReference type="RefSeq" id="XP_016879095.1">
    <property type="nucleotide sequence ID" value="XM_017023606.1"/>
</dbReference>
<dbReference type="RefSeq" id="XP_016879100.1">
    <property type="nucleotide sequence ID" value="XM_017023611.1"/>
</dbReference>
<dbReference type="RefSeq" id="XP_016879101.1">
    <property type="nucleotide sequence ID" value="XM_017023612.1"/>
</dbReference>
<dbReference type="RefSeq" id="XP_016879102.1">
    <property type="nucleotide sequence ID" value="XM_017023613.1"/>
</dbReference>
<dbReference type="RefSeq" id="XP_047290504.1">
    <molecule id="P50225-1"/>
    <property type="nucleotide sequence ID" value="XM_047434548.1"/>
</dbReference>
<dbReference type="PDB" id="1LS6">
    <property type="method" value="X-ray"/>
    <property type="resolution" value="1.90 A"/>
    <property type="chains" value="A=1-295"/>
</dbReference>
<dbReference type="PDB" id="1Z28">
    <property type="method" value="X-ray"/>
    <property type="resolution" value="2.30 A"/>
    <property type="chains" value="A=1-295"/>
</dbReference>
<dbReference type="PDB" id="2D06">
    <property type="method" value="X-ray"/>
    <property type="resolution" value="2.30 A"/>
    <property type="chains" value="A/B=1-295"/>
</dbReference>
<dbReference type="PDB" id="3QVU">
    <property type="method" value="X-ray"/>
    <property type="resolution" value="2.50 A"/>
    <property type="chains" value="A/B=1-295"/>
</dbReference>
<dbReference type="PDB" id="3QVV">
    <property type="method" value="X-ray"/>
    <property type="resolution" value="2.35 A"/>
    <property type="chains" value="A/B=1-295"/>
</dbReference>
<dbReference type="PDB" id="3U3J">
    <property type="method" value="X-ray"/>
    <property type="resolution" value="2.70 A"/>
    <property type="chains" value="A/B=1-294"/>
</dbReference>
<dbReference type="PDB" id="3U3K">
    <property type="method" value="X-ray"/>
    <property type="resolution" value="2.36 A"/>
    <property type="chains" value="A/B=1-295"/>
</dbReference>
<dbReference type="PDB" id="3U3M">
    <property type="method" value="X-ray"/>
    <property type="resolution" value="2.30 A"/>
    <property type="chains" value="A=1-295"/>
</dbReference>
<dbReference type="PDB" id="3U3O">
    <property type="method" value="X-ray"/>
    <property type="resolution" value="2.00 A"/>
    <property type="chains" value="A=1-295"/>
</dbReference>
<dbReference type="PDB" id="3U3R">
    <property type="method" value="X-ray"/>
    <property type="resolution" value="2.36 A"/>
    <property type="chains" value="A=1-295"/>
</dbReference>
<dbReference type="PDB" id="4GRA">
    <property type="method" value="X-ray"/>
    <property type="resolution" value="2.56 A"/>
    <property type="chains" value="A/B=1-295"/>
</dbReference>
<dbReference type="PDBsum" id="1LS6"/>
<dbReference type="PDBsum" id="1Z28"/>
<dbReference type="PDBsum" id="2D06"/>
<dbReference type="PDBsum" id="3QVU"/>
<dbReference type="PDBsum" id="3QVV"/>
<dbReference type="PDBsum" id="3U3J"/>
<dbReference type="PDBsum" id="3U3K"/>
<dbReference type="PDBsum" id="3U3M"/>
<dbReference type="PDBsum" id="3U3O"/>
<dbReference type="PDBsum" id="3U3R"/>
<dbReference type="PDBsum" id="4GRA"/>
<dbReference type="SMR" id="P50225"/>
<dbReference type="BioGRID" id="112686">
    <property type="interactions" value="72"/>
</dbReference>
<dbReference type="FunCoup" id="P50225">
    <property type="interactions" value="690"/>
</dbReference>
<dbReference type="IntAct" id="P50225">
    <property type="interactions" value="15"/>
</dbReference>
<dbReference type="MINT" id="P50225"/>
<dbReference type="STRING" id="9606.ENSP00000378972"/>
<dbReference type="BindingDB" id="P50225"/>
<dbReference type="ChEMBL" id="CHEMBL1743291"/>
<dbReference type="DrugBank" id="DB00316">
    <property type="generic name" value="Acetaminophen"/>
</dbReference>
<dbReference type="DrugBank" id="DB01812">
    <property type="generic name" value="Adenosine 3',5'-diphosphate"/>
</dbReference>
<dbReference type="DrugBank" id="DB00714">
    <property type="generic name" value="Apomorphine"/>
</dbReference>
<dbReference type="DrugBank" id="DB12243">
    <property type="generic name" value="Edaravone"/>
</dbReference>
<dbReference type="DrugBank" id="DB12471">
    <property type="generic name" value="Ibrexafungerp"/>
</dbReference>
<dbReference type="DrugBank" id="DB00968">
    <property type="generic name" value="Methyldopa"/>
</dbReference>
<dbReference type="DrugBank" id="DB04417">
    <property type="generic name" value="P-Nitrophenol"/>
</dbReference>
<dbReference type="DrugBank" id="DB00960">
    <property type="generic name" value="Pindolol"/>
</dbReference>
<dbReference type="DrugBank" id="DB11077">
    <property type="generic name" value="Polyethylene glycol 400"/>
</dbReference>
<dbReference type="DrugBank" id="DB09288">
    <property type="generic name" value="Propacetamol"/>
</dbReference>
<dbReference type="DrugBank" id="DB00867">
    <property type="generic name" value="Ritodrine"/>
</dbReference>
<dbReference type="DrugBank" id="DB00675">
    <property type="generic name" value="Tamoxifen"/>
</dbReference>
<dbReference type="DrugBank" id="DB00871">
    <property type="generic name" value="Terbutaline"/>
</dbReference>
<dbReference type="DrugBank" id="DB09100">
    <property type="generic name" value="Thyroid, porcine"/>
</dbReference>
<dbReference type="DrugBank" id="DB09070">
    <property type="generic name" value="Tibolone"/>
</dbReference>
<dbReference type="SwissLipids" id="SLP:000001651"/>
<dbReference type="GlyGen" id="P50225">
    <property type="glycosylation" value="1 site, 1 O-linked glycan (1 site)"/>
</dbReference>
<dbReference type="iPTMnet" id="P50225"/>
<dbReference type="PhosphoSitePlus" id="P50225"/>
<dbReference type="BioMuta" id="SULT1A1"/>
<dbReference type="DMDM" id="313104286"/>
<dbReference type="OGP" id="P50225"/>
<dbReference type="jPOST" id="P50225"/>
<dbReference type="MassIVE" id="P50225"/>
<dbReference type="PaxDb" id="9606-ENSP00000378972"/>
<dbReference type="PeptideAtlas" id="P50225"/>
<dbReference type="ProteomicsDB" id="56209">
    <molecule id="P50225-1"/>
</dbReference>
<dbReference type="ProteomicsDB" id="56210">
    <molecule id="P50225-2"/>
</dbReference>
<dbReference type="Pumba" id="P50225"/>
<dbReference type="Antibodypedia" id="26492">
    <property type="antibodies" value="478 antibodies from 32 providers"/>
</dbReference>
<dbReference type="DNASU" id="6817"/>
<dbReference type="Ensembl" id="ENST00000314752.12">
    <molecule id="P50225-1"/>
    <property type="protein sequence ID" value="ENSP00000321988.7"/>
    <property type="gene ID" value="ENSG00000196502.15"/>
</dbReference>
<dbReference type="Ensembl" id="ENST00000569554.5">
    <molecule id="P50225-1"/>
    <property type="protein sequence ID" value="ENSP00000457912.1"/>
    <property type="gene ID" value="ENSG00000196502.15"/>
</dbReference>
<dbReference type="GeneID" id="6817"/>
<dbReference type="KEGG" id="hsa:6817"/>
<dbReference type="MANE-Select" id="ENST00000314752.12">
    <property type="protein sequence ID" value="ENSP00000321988.7"/>
    <property type="RefSeq nucleotide sequence ID" value="NM_001055.4"/>
    <property type="RefSeq protein sequence ID" value="NP_001046.2"/>
</dbReference>
<dbReference type="UCSC" id="uc002dqi.4">
    <molecule id="P50225-1"/>
    <property type="organism name" value="human"/>
</dbReference>
<dbReference type="AGR" id="HGNC:11453"/>
<dbReference type="CTD" id="6817"/>
<dbReference type="DisGeNET" id="6817"/>
<dbReference type="GeneCards" id="SULT1A1"/>
<dbReference type="HGNC" id="HGNC:11453">
    <property type="gene designation" value="SULT1A1"/>
</dbReference>
<dbReference type="HPA" id="ENSG00000196502">
    <property type="expression patterns" value="Tissue enhanced (liver)"/>
</dbReference>
<dbReference type="MIM" id="171150">
    <property type="type" value="gene"/>
</dbReference>
<dbReference type="neXtProt" id="NX_P50225"/>
<dbReference type="OpenTargets" id="ENSG00000196502"/>
<dbReference type="PharmGKB" id="PA343"/>
<dbReference type="VEuPathDB" id="HostDB:ENSG00000196502"/>
<dbReference type="VEuPathDB" id="HostDB:ENSG00000288656"/>
<dbReference type="eggNOG" id="KOG1584">
    <property type="taxonomic scope" value="Eukaryota"/>
</dbReference>
<dbReference type="GeneTree" id="ENSGT00940000163450"/>
<dbReference type="HOGENOM" id="CLU_027239_6_1_1"/>
<dbReference type="InParanoid" id="P50225"/>
<dbReference type="OMA" id="ELFEAHY"/>
<dbReference type="OrthoDB" id="205623at2759"/>
<dbReference type="PAN-GO" id="P50225">
    <property type="GO annotations" value="3 GO annotations based on evolutionary models"/>
</dbReference>
<dbReference type="PhylomeDB" id="P50225"/>
<dbReference type="TreeFam" id="TF321745"/>
<dbReference type="BioCyc" id="MetaCyc:HS09898-MONOMER"/>
<dbReference type="BRENDA" id="2.8.2.1">
    <property type="organism ID" value="2681"/>
</dbReference>
<dbReference type="BRENDA" id="2.8.2.2">
    <property type="organism ID" value="2681"/>
</dbReference>
<dbReference type="PathwayCommons" id="P50225"/>
<dbReference type="Reactome" id="R-HSA-156584">
    <property type="pathway name" value="Cytosolic sulfonation of small molecules"/>
</dbReference>
<dbReference type="Reactome" id="R-HSA-9753281">
    <property type="pathway name" value="Paracetamol ADME"/>
</dbReference>
<dbReference type="SABIO-RK" id="P50225"/>
<dbReference type="SignaLink" id="P50225"/>
<dbReference type="BioGRID-ORCS" id="6817">
    <property type="hits" value="12 hits in 1093 CRISPR screens"/>
</dbReference>
<dbReference type="ChiTaRS" id="SULT1A1">
    <property type="organism name" value="human"/>
</dbReference>
<dbReference type="EvolutionaryTrace" id="P50225"/>
<dbReference type="GeneWiki" id="SULT1A1"/>
<dbReference type="GenomeRNAi" id="6817"/>
<dbReference type="Pharos" id="P50225">
    <property type="development level" value="Tchem"/>
</dbReference>
<dbReference type="PRO" id="PR:P50225"/>
<dbReference type="Proteomes" id="UP000005640">
    <property type="component" value="Chromosome 16"/>
</dbReference>
<dbReference type="RNAct" id="P50225">
    <property type="molecule type" value="protein"/>
</dbReference>
<dbReference type="Bgee" id="ENSG00000196502">
    <property type="expression patterns" value="Expressed in mucosa of transverse colon and 116 other cell types or tissues"/>
</dbReference>
<dbReference type="ExpressionAtlas" id="P50225">
    <property type="expression patterns" value="baseline and differential"/>
</dbReference>
<dbReference type="GO" id="GO:0005737">
    <property type="term" value="C:cytoplasm"/>
    <property type="evidence" value="ECO:0000318"/>
    <property type="project" value="GO_Central"/>
</dbReference>
<dbReference type="GO" id="GO:0005829">
    <property type="term" value="C:cytosol"/>
    <property type="evidence" value="ECO:0000250"/>
    <property type="project" value="UniProtKB"/>
</dbReference>
<dbReference type="GO" id="GO:0050656">
    <property type="term" value="F:3'-phosphoadenosine 5'-phosphosulfate binding"/>
    <property type="evidence" value="ECO:0000314"/>
    <property type="project" value="UniProtKB"/>
</dbReference>
<dbReference type="GO" id="GO:0004062">
    <property type="term" value="F:aryl sulfotransferase activity"/>
    <property type="evidence" value="ECO:0000314"/>
    <property type="project" value="UniProtKB"/>
</dbReference>
<dbReference type="GO" id="GO:0047894">
    <property type="term" value="F:flavonol 3-sulfotransferase activity"/>
    <property type="evidence" value="ECO:0000314"/>
    <property type="project" value="BHF-UCL"/>
</dbReference>
<dbReference type="GO" id="GO:0050294">
    <property type="term" value="F:steroid sulfotransferase activity"/>
    <property type="evidence" value="ECO:0000314"/>
    <property type="project" value="UniProtKB"/>
</dbReference>
<dbReference type="GO" id="GO:0008146">
    <property type="term" value="F:sulfotransferase activity"/>
    <property type="evidence" value="ECO:0000314"/>
    <property type="project" value="UniProtKB"/>
</dbReference>
<dbReference type="GO" id="GO:0050427">
    <property type="term" value="P:3'-phosphoadenosine 5'-phosphosulfate metabolic process"/>
    <property type="evidence" value="ECO:0000314"/>
    <property type="project" value="UniProtKB"/>
</dbReference>
<dbReference type="GO" id="GO:0009308">
    <property type="term" value="P:amine metabolic process"/>
    <property type="evidence" value="ECO:0000304"/>
    <property type="project" value="ProtInc"/>
</dbReference>
<dbReference type="GO" id="GO:0042420">
    <property type="term" value="P:dopamine catabolic process"/>
    <property type="evidence" value="ECO:0000314"/>
    <property type="project" value="UniProtKB"/>
</dbReference>
<dbReference type="GO" id="GO:0008210">
    <property type="term" value="P:estrogen metabolic process"/>
    <property type="evidence" value="ECO:0000314"/>
    <property type="project" value="UniProtKB"/>
</dbReference>
<dbReference type="GO" id="GO:0006068">
    <property type="term" value="P:ethanol catabolic process"/>
    <property type="evidence" value="ECO:0000314"/>
    <property type="project" value="CAFA"/>
</dbReference>
<dbReference type="GO" id="GO:0009812">
    <property type="term" value="P:flavonoid metabolic process"/>
    <property type="evidence" value="ECO:0000314"/>
    <property type="project" value="BHF-UCL"/>
</dbReference>
<dbReference type="GO" id="GO:0051923">
    <property type="term" value="P:sulfation"/>
    <property type="evidence" value="ECO:0000314"/>
    <property type="project" value="UniProtKB"/>
</dbReference>
<dbReference type="GO" id="GO:0042403">
    <property type="term" value="P:thyroid hormone metabolic process"/>
    <property type="evidence" value="ECO:0000314"/>
    <property type="project" value="UniProtKB"/>
</dbReference>
<dbReference type="GO" id="GO:0006805">
    <property type="term" value="P:xenobiotic metabolic process"/>
    <property type="evidence" value="ECO:0000314"/>
    <property type="project" value="UniProtKB"/>
</dbReference>
<dbReference type="FunFam" id="3.40.50.300:FF:000433">
    <property type="entry name" value="Estrogen sulfotransferase"/>
    <property type="match status" value="1"/>
</dbReference>
<dbReference type="Gene3D" id="3.40.50.300">
    <property type="entry name" value="P-loop containing nucleotide triphosphate hydrolases"/>
    <property type="match status" value="1"/>
</dbReference>
<dbReference type="InterPro" id="IPR027417">
    <property type="entry name" value="P-loop_NTPase"/>
</dbReference>
<dbReference type="InterPro" id="IPR000863">
    <property type="entry name" value="Sulfotransferase_dom"/>
</dbReference>
<dbReference type="PANTHER" id="PTHR11783">
    <property type="entry name" value="SULFOTRANSFERASE SULT"/>
    <property type="match status" value="1"/>
</dbReference>
<dbReference type="Pfam" id="PF00685">
    <property type="entry name" value="Sulfotransfer_1"/>
    <property type="match status" value="1"/>
</dbReference>
<dbReference type="SUPFAM" id="SSF52540">
    <property type="entry name" value="P-loop containing nucleoside triphosphate hydrolases"/>
    <property type="match status" value="1"/>
</dbReference>
<comment type="function">
    <text evidence="2 3 5 7 9 10 11 14 18">Sulfotransferase that utilizes 3'-phospho-5'-adenylyl sulfate (PAPS) as sulfonate donor to catalyze the sulfate conjugation of a wide variety of acceptor molecules bearing a hydroxyl or an amine group. Sulfonation increases the water solubility of most compounds, and therefore their renal excretion, but it can also result in bioactivation to form active metabolites. Displays broad substrate specificity for small phenolic compounds. Plays an important role in the sulfonation of endogenous molecules such as steroid hormones (PubMed:12471039, PubMed:16221673, PubMed:21723874, PubMed:22069470, PubMed:7834621). Mediates the sulfate conjugation of a variety of xenobiotics, including the drugs acetaminophen and minoxidil (By similarity). Mediates also the metabolic activation of carcinogenic N-hydroxyarylamines leading to highly reactive intermediates capable of forming DNA adducts, potentially resulting in mutagenesis (PubMed:7834621). May play a role in gut microbiota-host metabolic interaction. O-sulfonates 4-ethylphenol (4-EP), a dietary tyrosine-derived metabolite produced by gut bacteria. The product 4-EPS crosses the blood-brain barrier and may negatively regulate oligodendrocyte maturation and myelination, affecting the functional connectivity of different brain regions associated with the limbic system (PubMed:35165440). Catalyzes the sulfate conjugation of dopamine (PubMed:8093002). Catalyzes the sulfation of T4 (L-thyroxine/3,5,3',5'-tetraiodothyronine), T3 (3,5,3'-triiodothyronine), rT3 (3,3',5'-triiodothyronine) and 3,3'-T2 (3,3'-diiodothyronine), with a substrate preference of 3,3'-T2 &gt; rT3 &gt; T3 &gt; T4 (PubMed:10199779).</text>
</comment>
<comment type="catalytic activity">
    <reaction evidence="3 5 7 9 10 14 18">
        <text>a phenol + 3'-phosphoadenylyl sulfate = an aryl sulfate + adenosine 3',5'-bisphosphate + H(+)</text>
        <dbReference type="Rhea" id="RHEA:12164"/>
        <dbReference type="ChEBI" id="CHEBI:15378"/>
        <dbReference type="ChEBI" id="CHEBI:33853"/>
        <dbReference type="ChEBI" id="CHEBI:58339"/>
        <dbReference type="ChEBI" id="CHEBI:58343"/>
        <dbReference type="ChEBI" id="CHEBI:140317"/>
        <dbReference type="EC" id="2.8.2.1"/>
    </reaction>
    <physiologicalReaction direction="left-to-right" evidence="35">
        <dbReference type="Rhea" id="RHEA:12165"/>
    </physiologicalReaction>
</comment>
<comment type="catalytic activity">
    <reaction evidence="7">
        <text>17beta-estradiol + 3'-phosphoadenylyl sulfate = 17beta-estradiol 3-sulfate + adenosine 3',5'-bisphosphate + H(+)</text>
        <dbReference type="Rhea" id="RHEA:52372"/>
        <dbReference type="ChEBI" id="CHEBI:15378"/>
        <dbReference type="ChEBI" id="CHEBI:16469"/>
        <dbReference type="ChEBI" id="CHEBI:58339"/>
        <dbReference type="ChEBI" id="CHEBI:58343"/>
        <dbReference type="ChEBI" id="CHEBI:136582"/>
    </reaction>
    <physiologicalReaction direction="left-to-right" evidence="35">
        <dbReference type="Rhea" id="RHEA:52373"/>
    </physiologicalReaction>
</comment>
<comment type="catalytic activity">
    <reaction evidence="11">
        <text>4-ethylphenol + 3'-phosphoadenylyl sulfate = 4-ethylphenyl sulfate + adenosine 3',5'-bisphosphate + H(+)</text>
        <dbReference type="Rhea" id="RHEA:70607"/>
        <dbReference type="ChEBI" id="CHEBI:15378"/>
        <dbReference type="ChEBI" id="CHEBI:49584"/>
        <dbReference type="ChEBI" id="CHEBI:58339"/>
        <dbReference type="ChEBI" id="CHEBI:58343"/>
        <dbReference type="ChEBI" id="CHEBI:133681"/>
    </reaction>
    <physiologicalReaction direction="left-to-right" evidence="36">
        <dbReference type="Rhea" id="RHEA:70608"/>
    </physiologicalReaction>
</comment>
<comment type="catalytic activity">
    <reaction evidence="18">
        <text>4-nitrophenol + 3'-phosphoadenylyl sulfate = 4-nitrophenyl sulfate + adenosine 3',5'-bisphosphate</text>
        <dbReference type="Rhea" id="RHEA:66548"/>
        <dbReference type="ChEBI" id="CHEBI:57917"/>
        <dbReference type="ChEBI" id="CHEBI:58339"/>
        <dbReference type="ChEBI" id="CHEBI:58343"/>
        <dbReference type="ChEBI" id="CHEBI:140994"/>
    </reaction>
    <physiologicalReaction direction="left-to-right" evidence="37">
        <dbReference type="Rhea" id="RHEA:66549"/>
    </physiologicalReaction>
</comment>
<comment type="catalytic activity">
    <reaction evidence="18">
        <text>dopamine + 3'-phosphoadenylyl sulfate = dopamine 3-O-sulfate + adenosine 3',5'-bisphosphate + H(+)</text>
        <dbReference type="Rhea" id="RHEA:67880"/>
        <dbReference type="ChEBI" id="CHEBI:15378"/>
        <dbReference type="ChEBI" id="CHEBI:58339"/>
        <dbReference type="ChEBI" id="CHEBI:58343"/>
        <dbReference type="ChEBI" id="CHEBI:59905"/>
        <dbReference type="ChEBI" id="CHEBI:133524"/>
    </reaction>
    <physiologicalReaction direction="left-to-right" evidence="37">
        <dbReference type="Rhea" id="RHEA:67881"/>
    </physiologicalReaction>
</comment>
<comment type="catalytic activity">
    <reaction evidence="18">
        <text>dopamine + 3'-phosphoadenylyl sulfate = dopamine 4-O-sulfate + adenosine 3',5'-bisphosphate + H(+)</text>
        <dbReference type="Rhea" id="RHEA:67884"/>
        <dbReference type="ChEBI" id="CHEBI:15378"/>
        <dbReference type="ChEBI" id="CHEBI:58339"/>
        <dbReference type="ChEBI" id="CHEBI:58343"/>
        <dbReference type="ChEBI" id="CHEBI:59905"/>
        <dbReference type="ChEBI" id="CHEBI:133529"/>
    </reaction>
    <physiologicalReaction direction="left-to-right" evidence="37">
        <dbReference type="Rhea" id="RHEA:67885"/>
    </physiologicalReaction>
</comment>
<comment type="catalytic activity">
    <reaction evidence="3">
        <text>3,3',5-triiodo-L-thyronine + 3'-phosphoadenylyl sulfate = 3,3',5-triiodo-L-thyronine sulfate + adenosine 3',5'-bisphosphate + H(+)</text>
        <dbReference type="Rhea" id="RHEA:67876"/>
        <dbReference type="ChEBI" id="CHEBI:15378"/>
        <dbReference type="ChEBI" id="CHEBI:58339"/>
        <dbReference type="ChEBI" id="CHEBI:58343"/>
        <dbReference type="ChEBI" id="CHEBI:176511"/>
        <dbReference type="ChEBI" id="CHEBI:533015"/>
    </reaction>
    <physiologicalReaction direction="left-to-right" evidence="33">
        <dbReference type="Rhea" id="RHEA:67877"/>
    </physiologicalReaction>
</comment>
<comment type="catalytic activity">
    <reaction evidence="3">
        <text>3,3',5'-triiodo-L-thyronine + 3'-phosphoadenylyl sulfate = 3,3',5'-triiodo-L-thyronine sulfate + adenosine 3',5'-bisphosphate + H(+)</text>
        <dbReference type="Rhea" id="RHEA:67888"/>
        <dbReference type="ChEBI" id="CHEBI:15378"/>
        <dbReference type="ChEBI" id="CHEBI:57261"/>
        <dbReference type="ChEBI" id="CHEBI:58339"/>
        <dbReference type="ChEBI" id="CHEBI:58343"/>
        <dbReference type="ChEBI" id="CHEBI:176513"/>
    </reaction>
    <physiologicalReaction direction="left-to-right" evidence="33">
        <dbReference type="Rhea" id="RHEA:67889"/>
    </physiologicalReaction>
</comment>
<comment type="catalytic activity">
    <reaction evidence="3">
        <text>3,3'-diiodo-L-thyronine + 3'-phosphoadenylyl sulfate = 3,3'-diiodo-L-thyronine sulfate + adenosine 3',5'-bisphosphate + H(+)</text>
        <dbReference type="Rhea" id="RHEA:67892"/>
        <dbReference type="ChEBI" id="CHEBI:15378"/>
        <dbReference type="ChEBI" id="CHEBI:58339"/>
        <dbReference type="ChEBI" id="CHEBI:58343"/>
        <dbReference type="ChEBI" id="CHEBI:176514"/>
        <dbReference type="ChEBI" id="CHEBI:176515"/>
    </reaction>
    <physiologicalReaction direction="left-to-right" evidence="33">
        <dbReference type="Rhea" id="RHEA:67893"/>
    </physiologicalReaction>
</comment>
<comment type="catalytic activity">
    <reaction evidence="3">
        <text>L-thyroxine + 3'-phosphoadenylyl sulfate = L-thyroxine sulfate + adenosine 3',5'-bisphosphate + H(+)</text>
        <dbReference type="Rhea" id="RHEA:83575"/>
        <dbReference type="ChEBI" id="CHEBI:15378"/>
        <dbReference type="ChEBI" id="CHEBI:58339"/>
        <dbReference type="ChEBI" id="CHEBI:58343"/>
        <dbReference type="ChEBI" id="CHEBI:58448"/>
        <dbReference type="ChEBI" id="CHEBI:176512"/>
    </reaction>
    <physiologicalReaction direction="left-to-right" evidence="33">
        <dbReference type="Rhea" id="RHEA:83576"/>
    </physiologicalReaction>
</comment>
<comment type="biophysicochemical properties">
    <kinetics>
        <KM evidence="3">0.12 uM for 3,3'-diiodothyronine</KM>
        <KM evidence="18">0.6 uM for 4-nitrophenol</KM>
        <KM evidence="18">345 uM for dopamine</KM>
        <Vmax evidence="18">0.16 nmol/min/mg enzyme towards dopamine</Vmax>
        <Vmax evidence="18">7.5 nmol/min/mg enzyme towards 4-nitrophenol</Vmax>
        <Vmax evidence="3">465.0 umol/min/mg enzyme towards 3,3'-diiodothyronine</Vmax>
    </kinetics>
</comment>
<comment type="subunit">
    <text evidence="5 7 8">Homodimer.</text>
</comment>
<comment type="interaction">
    <interactant intactId="EBI-2814403">
        <id>P50225</id>
    </interactant>
    <interactant intactId="EBI-749441">
        <id>O00204</id>
        <label>SULT2B1</label>
    </interactant>
    <organismsDiffer>false</organismsDiffer>
    <experiments>8</experiments>
</comment>
<comment type="subcellular location">
    <subcellularLocation>
        <location evidence="18">Cytoplasm</location>
    </subcellularLocation>
</comment>
<comment type="alternative products">
    <event type="alternative splicing"/>
    <isoform>
        <id>P50225-1</id>
        <name>1</name>
        <sequence type="displayed"/>
    </isoform>
    <isoform>
        <id>P50225-2</id>
        <name>2</name>
        <sequence type="described" ref="VSP_040101"/>
    </isoform>
</comment>
<comment type="tissue specificity">
    <text>Liver, lung, adrenal, brain, platelets and skin.</text>
</comment>
<comment type="polymorphism">
    <text evidence="34 38">There are several alleles. The sequence shown is that of allele SULT1A1*3.</text>
</comment>
<comment type="similarity">
    <text evidence="32">Belongs to the sulfotransferase 1 family.</text>
</comment>
<evidence type="ECO:0000250" key="1">
    <source>
        <dbReference type="UniProtKB" id="P0DMM9"/>
    </source>
</evidence>
<evidence type="ECO:0000250" key="2">
    <source>
        <dbReference type="UniProtKB" id="P17988"/>
    </source>
</evidence>
<evidence type="ECO:0000269" key="3">
    <source>
    </source>
</evidence>
<evidence type="ECO:0000269" key="4">
    <source>
    </source>
</evidence>
<evidence type="ECO:0000269" key="5">
    <source>
    </source>
</evidence>
<evidence type="ECO:0000269" key="6">
    <source>
    </source>
</evidence>
<evidence type="ECO:0000269" key="7">
    <source>
    </source>
</evidence>
<evidence type="ECO:0000269" key="8">
    <source>
    </source>
</evidence>
<evidence type="ECO:0000269" key="9">
    <source>
    </source>
</evidence>
<evidence type="ECO:0000269" key="10">
    <source>
    </source>
</evidence>
<evidence type="ECO:0000269" key="11">
    <source>
    </source>
</evidence>
<evidence type="ECO:0000269" key="12">
    <source>
    </source>
</evidence>
<evidence type="ECO:0000269" key="13">
    <source>
    </source>
</evidence>
<evidence type="ECO:0000269" key="14">
    <source>
    </source>
</evidence>
<evidence type="ECO:0000269" key="15">
    <source>
    </source>
</evidence>
<evidence type="ECO:0000269" key="16">
    <source>
    </source>
</evidence>
<evidence type="ECO:0000269" key="17">
    <source>
    </source>
</evidence>
<evidence type="ECO:0000269" key="18">
    <source>
    </source>
</evidence>
<evidence type="ECO:0000269" key="19">
    <source>
    </source>
</evidence>
<evidence type="ECO:0000269" key="20">
    <source>
    </source>
</evidence>
<evidence type="ECO:0000269" key="21">
    <source>
    </source>
</evidence>
<evidence type="ECO:0000269" key="22">
    <source>
    </source>
</evidence>
<evidence type="ECO:0000269" key="23">
    <source>
    </source>
</evidence>
<evidence type="ECO:0000269" key="24">
    <source>
    </source>
</evidence>
<evidence type="ECO:0000269" key="25">
    <source>
    </source>
</evidence>
<evidence type="ECO:0000269" key="26">
    <source ref="11"/>
</evidence>
<evidence type="ECO:0000269" key="27">
    <source ref="12"/>
</evidence>
<evidence type="ECO:0000269" key="28">
    <source ref="13"/>
</evidence>
<evidence type="ECO:0000303" key="29">
    <source>
    </source>
</evidence>
<evidence type="ECO:0000303" key="30">
    <source>
    </source>
</evidence>
<evidence type="ECO:0000303" key="31">
    <source ref="14"/>
</evidence>
<evidence type="ECO:0000305" key="32"/>
<evidence type="ECO:0000305" key="33">
    <source>
    </source>
</evidence>
<evidence type="ECO:0000305" key="34">
    <source>
    </source>
</evidence>
<evidence type="ECO:0000305" key="35">
    <source>
    </source>
</evidence>
<evidence type="ECO:0000305" key="36">
    <source>
    </source>
</evidence>
<evidence type="ECO:0000305" key="37">
    <source>
    </source>
</evidence>
<evidence type="ECO:0000305" key="38">
    <source>
    </source>
</evidence>
<evidence type="ECO:0007744" key="39">
    <source>
    </source>
</evidence>
<evidence type="ECO:0007829" key="40">
    <source>
        <dbReference type="PDB" id="1LS6"/>
    </source>
</evidence>
<evidence type="ECO:0007829" key="41">
    <source>
        <dbReference type="PDB" id="4GRA"/>
    </source>
</evidence>
<gene>
    <name type="primary">SULT1A1</name>
    <name type="synonym">STP</name>
    <name type="synonym">STP1</name>
    <name type="ORF">OK/SW-cl.88</name>
</gene>